<evidence type="ECO:0000269" key="1">
    <source>
    </source>
</evidence>
<evidence type="ECO:0000303" key="2">
    <source>
    </source>
</evidence>
<evidence type="ECO:0000305" key="3"/>
<evidence type="ECO:0000305" key="4">
    <source>
    </source>
</evidence>
<evidence type="ECO:0007744" key="5">
    <source>
        <dbReference type="PDB" id="7R81"/>
    </source>
</evidence>
<gene>
    <name type="primary">rpl-17</name>
    <name type="ORF">B9B15.190</name>
    <name type="ORF">NCU03703</name>
</gene>
<comment type="function">
    <text evidence="4">Component of the ribosome, a large ribonucleoprotein complex responsible for the synthesis of proteins in the cell. The small ribosomal subunit (SSU) binds messenger RNAs (mRNAs) and translates the encoded message by selecting cognate aminoacyl-transfer RNA (tRNA) molecules. The large subunit (LSU) contains the ribosomal catalytic site termed the peptidyl transferase center (PTC), which catalyzes the formation of peptide bonds, thereby polymerizing the amino acids delivered by tRNAs into a polypeptide chain. The nascent polypeptides leave the ribosome through a tunnel in the LSU and interact with protein factors that function in enzymatic processing, targeting, and the membrane insertion of nascent chains at the exit of the ribosomal tunnel.</text>
</comment>
<comment type="subunit">
    <text evidence="1">Component of the large ribosomal subunit (LSU). Mature N.crassa ribosomes consist of a small (40S) and a large (60S) subunit. The 40S small subunit contains 1 molecule of ribosomal RNA (18S rRNA) and at least 32 different proteins. The large 60S subunit contains 3 rRNA molecules (26S, 5.8S and 5S rRNA) and at least 42 different proteins.</text>
</comment>
<comment type="subcellular location">
    <subcellularLocation>
        <location evidence="1">Cytoplasm</location>
    </subcellularLocation>
</comment>
<comment type="similarity">
    <text evidence="3">Belongs to the universal ribosomal protein uL22 family.</text>
</comment>
<accession>Q9HE25</accession>
<accession>Q7RVD8</accession>
<reference key="1">
    <citation type="journal article" date="2003" name="Nucleic Acids Res.">
        <title>What's in the genome of a filamentous fungus? Analysis of the Neurospora genome sequence.</title>
        <authorList>
            <person name="Mannhaupt G."/>
            <person name="Montrone C."/>
            <person name="Haase D."/>
            <person name="Mewes H.-W."/>
            <person name="Aign V."/>
            <person name="Hoheisel J.D."/>
            <person name="Fartmann B."/>
            <person name="Nyakatura G."/>
            <person name="Kempken F."/>
            <person name="Maier J."/>
            <person name="Schulte U."/>
        </authorList>
    </citation>
    <scope>NUCLEOTIDE SEQUENCE [LARGE SCALE GENOMIC DNA]</scope>
    <source>
        <strain>ATCC 24698 / 74-OR23-1A / CBS 708.71 / DSM 1257 / FGSC 987</strain>
    </source>
</reference>
<reference key="2">
    <citation type="journal article" date="2003" name="Nature">
        <title>The genome sequence of the filamentous fungus Neurospora crassa.</title>
        <authorList>
            <person name="Galagan J.E."/>
            <person name="Calvo S.E."/>
            <person name="Borkovich K.A."/>
            <person name="Selker E.U."/>
            <person name="Read N.D."/>
            <person name="Jaffe D.B."/>
            <person name="FitzHugh W."/>
            <person name="Ma L.-J."/>
            <person name="Smirnov S."/>
            <person name="Purcell S."/>
            <person name="Rehman B."/>
            <person name="Elkins T."/>
            <person name="Engels R."/>
            <person name="Wang S."/>
            <person name="Nielsen C.B."/>
            <person name="Butler J."/>
            <person name="Endrizzi M."/>
            <person name="Qui D."/>
            <person name="Ianakiev P."/>
            <person name="Bell-Pedersen D."/>
            <person name="Nelson M.A."/>
            <person name="Werner-Washburne M."/>
            <person name="Selitrennikoff C.P."/>
            <person name="Kinsey J.A."/>
            <person name="Braun E.L."/>
            <person name="Zelter A."/>
            <person name="Schulte U."/>
            <person name="Kothe G.O."/>
            <person name="Jedd G."/>
            <person name="Mewes H.-W."/>
            <person name="Staben C."/>
            <person name="Marcotte E."/>
            <person name="Greenberg D."/>
            <person name="Roy A."/>
            <person name="Foley K."/>
            <person name="Naylor J."/>
            <person name="Stange-Thomann N."/>
            <person name="Barrett R."/>
            <person name="Gnerre S."/>
            <person name="Kamal M."/>
            <person name="Kamvysselis M."/>
            <person name="Mauceli E.W."/>
            <person name="Bielke C."/>
            <person name="Rudd S."/>
            <person name="Frishman D."/>
            <person name="Krystofova S."/>
            <person name="Rasmussen C."/>
            <person name="Metzenberg R.L."/>
            <person name="Perkins D.D."/>
            <person name="Kroken S."/>
            <person name="Cogoni C."/>
            <person name="Macino G."/>
            <person name="Catcheside D.E.A."/>
            <person name="Li W."/>
            <person name="Pratt R.J."/>
            <person name="Osmani S.A."/>
            <person name="DeSouza C.P.C."/>
            <person name="Glass N.L."/>
            <person name="Orbach M.J."/>
            <person name="Berglund J.A."/>
            <person name="Voelker R."/>
            <person name="Yarden O."/>
            <person name="Plamann M."/>
            <person name="Seiler S."/>
            <person name="Dunlap J.C."/>
            <person name="Radford A."/>
            <person name="Aramayo R."/>
            <person name="Natvig D.O."/>
            <person name="Alex L.A."/>
            <person name="Mannhaupt G."/>
            <person name="Ebbole D.J."/>
            <person name="Freitag M."/>
            <person name="Paulsen I."/>
            <person name="Sachs M.S."/>
            <person name="Lander E.S."/>
            <person name="Nusbaum C."/>
            <person name="Birren B.W."/>
        </authorList>
    </citation>
    <scope>NUCLEOTIDE SEQUENCE [LARGE SCALE GENOMIC DNA]</scope>
    <source>
        <strain>ATCC 24698 / 74-OR23-1A / CBS 708.71 / DSM 1257 / FGSC 987</strain>
    </source>
</reference>
<reference evidence="5" key="3">
    <citation type="journal article" date="2021" name="Proc. Natl. Acad. Sci. U.S.A.">
        <title>Structure of the translating Neurospora ribosome arrested by cycloheximide.</title>
        <authorList>
            <person name="Shen L."/>
            <person name="Su Z."/>
            <person name="Yang K."/>
            <person name="Wu C."/>
            <person name="Becker T."/>
            <person name="Bell-Pedersen D."/>
            <person name="Zhang J."/>
            <person name="Sachs M.S."/>
        </authorList>
    </citation>
    <scope>STRUCTURE BY ELECTRON MICROSCOPY (2.70 ANGSTROMS)</scope>
</reference>
<protein>
    <recommendedName>
        <fullName evidence="2">Large ribosomal subunit protein uL22</fullName>
    </recommendedName>
    <alternativeName>
        <fullName>60S ribosomal protein L17</fullName>
    </alternativeName>
</protein>
<sequence length="186" mass="20764">MVRYAATEIAPAKSARSRGSYLRVSFKNTRETAQAINGWKLQRAQKFLENVLEKKEAVPMRRYAGGTGRAAQGKQFGVSRARWPAKSAEFLLGLLKNAEANADAKGLDTGNLVVKHIQVNQAPKQRRRTYRAHGRINPYMSNPCHIELILTEADEVVQKSEAVVREEAHLSSRQRGARVRRAITAA</sequence>
<proteinExistence type="evidence at protein level"/>
<name>RL17_NEUCR</name>
<feature type="chain" id="PRO_0000125343" description="Large ribosomal subunit protein uL22">
    <location>
        <begin position="1"/>
        <end position="186"/>
    </location>
</feature>
<dbReference type="EMBL" id="AL451014">
    <property type="protein sequence ID" value="CAC18189.1"/>
    <property type="molecule type" value="Genomic_DNA"/>
</dbReference>
<dbReference type="EMBL" id="CM002240">
    <property type="protein sequence ID" value="EAA32243.2"/>
    <property type="molecule type" value="Genomic_DNA"/>
</dbReference>
<dbReference type="RefSeq" id="XP_961479.2">
    <property type="nucleotide sequence ID" value="XM_956386.3"/>
</dbReference>
<dbReference type="PDB" id="7R81">
    <property type="method" value="EM"/>
    <property type="resolution" value="2.70 A"/>
    <property type="chains" value="R1=1-186"/>
</dbReference>
<dbReference type="PDBsum" id="7R81"/>
<dbReference type="EMDB" id="EMD-24307"/>
<dbReference type="SMR" id="Q9HE25"/>
<dbReference type="FunCoup" id="Q9HE25">
    <property type="interactions" value="959"/>
</dbReference>
<dbReference type="STRING" id="367110.Q9HE25"/>
<dbReference type="PaxDb" id="5141-EFNCRP00000003401"/>
<dbReference type="EnsemblFungi" id="EAA32243">
    <property type="protein sequence ID" value="EAA32243"/>
    <property type="gene ID" value="NCU03703"/>
</dbReference>
<dbReference type="GeneID" id="3877643"/>
<dbReference type="KEGG" id="ncr:NCU03703"/>
<dbReference type="VEuPathDB" id="FungiDB:NCU03703"/>
<dbReference type="HOGENOM" id="CLU_083987_0_0_1"/>
<dbReference type="InParanoid" id="Q9HE25"/>
<dbReference type="OMA" id="NTYETAR"/>
<dbReference type="OrthoDB" id="10254664at2759"/>
<dbReference type="Proteomes" id="UP000001805">
    <property type="component" value="Chromosome 2, Linkage Group V"/>
</dbReference>
<dbReference type="GO" id="GO:0022625">
    <property type="term" value="C:cytosolic large ribosomal subunit"/>
    <property type="evidence" value="ECO:0000318"/>
    <property type="project" value="GO_Central"/>
</dbReference>
<dbReference type="GO" id="GO:0003735">
    <property type="term" value="F:structural constituent of ribosome"/>
    <property type="evidence" value="ECO:0000318"/>
    <property type="project" value="GO_Central"/>
</dbReference>
<dbReference type="GO" id="GO:0002181">
    <property type="term" value="P:cytoplasmic translation"/>
    <property type="evidence" value="ECO:0000318"/>
    <property type="project" value="GO_Central"/>
</dbReference>
<dbReference type="CDD" id="cd00336">
    <property type="entry name" value="Ribosomal_L22"/>
    <property type="match status" value="1"/>
</dbReference>
<dbReference type="FunFam" id="3.90.470.10:FF:000010">
    <property type="entry name" value="60S ribosomal protein L17"/>
    <property type="match status" value="1"/>
</dbReference>
<dbReference type="Gene3D" id="3.90.470.10">
    <property type="entry name" value="Ribosomal protein L22/L17"/>
    <property type="match status" value="1"/>
</dbReference>
<dbReference type="InterPro" id="IPR001063">
    <property type="entry name" value="Ribosomal_uL22"/>
</dbReference>
<dbReference type="InterPro" id="IPR018260">
    <property type="entry name" value="Ribosomal_uL22_CS"/>
</dbReference>
<dbReference type="InterPro" id="IPR005721">
    <property type="entry name" value="Ribosomal_uL22_euk/arc"/>
</dbReference>
<dbReference type="InterPro" id="IPR036394">
    <property type="entry name" value="Ribosomal_uL22_sf"/>
</dbReference>
<dbReference type="NCBIfam" id="TIGR01038">
    <property type="entry name" value="uL22_arch_euk"/>
    <property type="match status" value="1"/>
</dbReference>
<dbReference type="PANTHER" id="PTHR11593">
    <property type="entry name" value="60S RIBOSOMAL PROTEIN L17"/>
    <property type="match status" value="1"/>
</dbReference>
<dbReference type="PANTHER" id="PTHR11593:SF10">
    <property type="entry name" value="60S RIBOSOMAL PROTEIN L17"/>
    <property type="match status" value="1"/>
</dbReference>
<dbReference type="Pfam" id="PF00237">
    <property type="entry name" value="Ribosomal_L22"/>
    <property type="match status" value="1"/>
</dbReference>
<dbReference type="SUPFAM" id="SSF54843">
    <property type="entry name" value="Ribosomal protein L22"/>
    <property type="match status" value="1"/>
</dbReference>
<dbReference type="PROSITE" id="PS00464">
    <property type="entry name" value="RIBOSOMAL_L22"/>
    <property type="match status" value="1"/>
</dbReference>
<organism>
    <name type="scientific">Neurospora crassa (strain ATCC 24698 / 74-OR23-1A / CBS 708.71 / DSM 1257 / FGSC 987)</name>
    <dbReference type="NCBI Taxonomy" id="367110"/>
    <lineage>
        <taxon>Eukaryota</taxon>
        <taxon>Fungi</taxon>
        <taxon>Dikarya</taxon>
        <taxon>Ascomycota</taxon>
        <taxon>Pezizomycotina</taxon>
        <taxon>Sordariomycetes</taxon>
        <taxon>Sordariomycetidae</taxon>
        <taxon>Sordariales</taxon>
        <taxon>Sordariaceae</taxon>
        <taxon>Neurospora</taxon>
    </lineage>
</organism>
<keyword id="KW-0002">3D-structure</keyword>
<keyword id="KW-0963">Cytoplasm</keyword>
<keyword id="KW-1185">Reference proteome</keyword>
<keyword id="KW-0687">Ribonucleoprotein</keyword>
<keyword id="KW-0689">Ribosomal protein</keyword>